<keyword id="KW-0002">3D-structure</keyword>
<keyword id="KW-0238">DNA-binding</keyword>
<keyword id="KW-0479">Metal-binding</keyword>
<keyword id="KW-0533">Nickel</keyword>
<keyword id="KW-1185">Reference proteome</keyword>
<keyword id="KW-0678">Repressor</keyword>
<keyword id="KW-0804">Transcription</keyword>
<keyword id="KW-0805">Transcription regulation</keyword>
<gene>
    <name type="primary">niaR</name>
    <name type="ordered locus">TM_1602</name>
</gene>
<protein>
    <recommendedName>
        <fullName>Probable transcription repressor NiaR</fullName>
    </recommendedName>
</protein>
<name>NIAR_THEMA</name>
<accession>Q9X1T8</accession>
<dbReference type="EMBL" id="AE000512">
    <property type="protein sequence ID" value="AAD36669.1"/>
    <property type="molecule type" value="Genomic_DNA"/>
</dbReference>
<dbReference type="PIR" id="F72234">
    <property type="entry name" value="F72234"/>
</dbReference>
<dbReference type="RefSeq" id="NP_229402.1">
    <property type="nucleotide sequence ID" value="NC_000853.1"/>
</dbReference>
<dbReference type="RefSeq" id="WP_004082049.1">
    <property type="nucleotide sequence ID" value="NZ_CP011107.1"/>
</dbReference>
<dbReference type="PDB" id="1J5Y">
    <property type="method" value="X-ray"/>
    <property type="resolution" value="2.30 A"/>
    <property type="chains" value="A=1-175"/>
</dbReference>
<dbReference type="PDB" id="9EBR">
    <property type="method" value="X-ray"/>
    <property type="resolution" value="2.30 A"/>
    <property type="chains" value="A=1-175"/>
</dbReference>
<dbReference type="PDBsum" id="1J5Y"/>
<dbReference type="PDBsum" id="9EBR"/>
<dbReference type="SMR" id="Q9X1T8"/>
<dbReference type="FunCoup" id="Q9X1T8">
    <property type="interactions" value="7"/>
</dbReference>
<dbReference type="STRING" id="243274.TM_1602"/>
<dbReference type="PaxDb" id="243274-THEMA_06240"/>
<dbReference type="EnsemblBacteria" id="AAD36669">
    <property type="protein sequence ID" value="AAD36669"/>
    <property type="gene ID" value="TM_1602"/>
</dbReference>
<dbReference type="KEGG" id="tma:TM1602"/>
<dbReference type="KEGG" id="tmi:THEMA_06240"/>
<dbReference type="KEGG" id="tmw:THMA_1642"/>
<dbReference type="PATRIC" id="fig|243274.18.peg.1208"/>
<dbReference type="eggNOG" id="COG1827">
    <property type="taxonomic scope" value="Bacteria"/>
</dbReference>
<dbReference type="InParanoid" id="Q9X1T8"/>
<dbReference type="OrthoDB" id="9792661at2"/>
<dbReference type="EvolutionaryTrace" id="Q9X1T8"/>
<dbReference type="Proteomes" id="UP000008183">
    <property type="component" value="Chromosome"/>
</dbReference>
<dbReference type="GO" id="GO:0003677">
    <property type="term" value="F:DNA binding"/>
    <property type="evidence" value="ECO:0007669"/>
    <property type="project" value="UniProtKB-KW"/>
</dbReference>
<dbReference type="GO" id="GO:0046872">
    <property type="term" value="F:metal ion binding"/>
    <property type="evidence" value="ECO:0007669"/>
    <property type="project" value="UniProtKB-KW"/>
</dbReference>
<dbReference type="Gene3D" id="3.30.1340.20">
    <property type="entry name" value="3H domain"/>
    <property type="match status" value="1"/>
</dbReference>
<dbReference type="Gene3D" id="1.10.10.10">
    <property type="entry name" value="Winged helix-like DNA-binding domain superfamily/Winged helix DNA-binding domain"/>
    <property type="match status" value="1"/>
</dbReference>
<dbReference type="InterPro" id="IPR035922">
    <property type="entry name" value="3H_dom_sf"/>
</dbReference>
<dbReference type="InterPro" id="IPR004173">
    <property type="entry name" value="3H_domain"/>
</dbReference>
<dbReference type="InterPro" id="IPR013196">
    <property type="entry name" value="HTH_11"/>
</dbReference>
<dbReference type="InterPro" id="IPR026043">
    <property type="entry name" value="NadR"/>
</dbReference>
<dbReference type="InterPro" id="IPR036388">
    <property type="entry name" value="WH-like_DNA-bd_sf"/>
</dbReference>
<dbReference type="InterPro" id="IPR036390">
    <property type="entry name" value="WH_DNA-bd_sf"/>
</dbReference>
<dbReference type="PANTHER" id="PTHR40068">
    <property type="entry name" value="TRANSCRIPTION REPRESSOR NIAR-RELATED"/>
    <property type="match status" value="1"/>
</dbReference>
<dbReference type="PANTHER" id="PTHR40068:SF1">
    <property type="entry name" value="TRANSCRIPTION REPRESSOR NIAR-RELATED"/>
    <property type="match status" value="1"/>
</dbReference>
<dbReference type="Pfam" id="PF02829">
    <property type="entry name" value="3H"/>
    <property type="match status" value="1"/>
</dbReference>
<dbReference type="Pfam" id="PF08279">
    <property type="entry name" value="HTH_11"/>
    <property type="match status" value="1"/>
</dbReference>
<dbReference type="PIRSF" id="PIRSF037847">
    <property type="entry name" value="NiaR"/>
    <property type="match status" value="1"/>
</dbReference>
<dbReference type="SUPFAM" id="SSF75500">
    <property type="entry name" value="Putative transcriptional regulator TM1602, C-terminal domain"/>
    <property type="match status" value="1"/>
</dbReference>
<dbReference type="SUPFAM" id="SSF46785">
    <property type="entry name" value="Winged helix' DNA-binding domain"/>
    <property type="match status" value="1"/>
</dbReference>
<reference key="1">
    <citation type="journal article" date="1999" name="Nature">
        <title>Evidence for lateral gene transfer between Archaea and Bacteria from genome sequence of Thermotoga maritima.</title>
        <authorList>
            <person name="Nelson K.E."/>
            <person name="Clayton R.A."/>
            <person name="Gill S.R."/>
            <person name="Gwinn M.L."/>
            <person name="Dodson R.J."/>
            <person name="Haft D.H."/>
            <person name="Hickey E.K."/>
            <person name="Peterson J.D."/>
            <person name="Nelson W.C."/>
            <person name="Ketchum K.A."/>
            <person name="McDonald L.A."/>
            <person name="Utterback T.R."/>
            <person name="Malek J.A."/>
            <person name="Linher K.D."/>
            <person name="Garrett M.M."/>
            <person name="Stewart A.M."/>
            <person name="Cotton M.D."/>
            <person name="Pratt M.S."/>
            <person name="Phillips C.A."/>
            <person name="Richardson D.L."/>
            <person name="Heidelberg J.F."/>
            <person name="Sutton G.G."/>
            <person name="Fleischmann R.D."/>
            <person name="Eisen J.A."/>
            <person name="White O."/>
            <person name="Salzberg S.L."/>
            <person name="Smith H.O."/>
            <person name="Venter J.C."/>
            <person name="Fraser C.M."/>
        </authorList>
    </citation>
    <scope>NUCLEOTIDE SEQUENCE [LARGE SCALE GENOMIC DNA]</scope>
    <source>
        <strain>ATCC 43589 / DSM 3109 / JCM 10099 / NBRC 100826 / MSB8</strain>
    </source>
</reference>
<reference key="2">
    <citation type="journal article" date="2008" name="Nucleic Acids Res.">
        <title>Transcriptional regulation of NAD metabolism in bacteria: genomic reconstruction of NiaR (YrxA) regulon.</title>
        <authorList>
            <person name="Rodionov D.A."/>
            <person name="Li X."/>
            <person name="Rodionova I.A."/>
            <person name="Yang C."/>
            <person name="Sorci L."/>
            <person name="Dervyn E."/>
            <person name="Martynowski D."/>
            <person name="Zhang H."/>
            <person name="Gelfand M.S."/>
            <person name="Osterman A.L."/>
        </authorList>
    </citation>
    <scope>DNA-BINDING</scope>
    <source>
        <strain>ATCC 43589 / DSM 3109 / JCM 10099 / NBRC 100826 / MSB8</strain>
    </source>
</reference>
<reference key="3">
    <citation type="journal article" date="2007" name="Proteins">
        <title>Crystal structure of a transcription regulator (TM1602) from Thermotoga maritima at 2.3 A resolution.</title>
        <authorList>
            <person name="Weekes D."/>
            <person name="Miller M.D."/>
            <person name="Krishna S.S."/>
            <person name="McMullan D."/>
            <person name="McPhillips T.M."/>
            <person name="Acosta C."/>
            <person name="Canaves J.M."/>
            <person name="Elsliger M.A."/>
            <person name="Floyd R."/>
            <person name="Grzechnik S.K."/>
            <person name="Jaroszewski L."/>
            <person name="Klock H.E."/>
            <person name="Koesema E."/>
            <person name="Kovarik J.S."/>
            <person name="Kreusch A."/>
            <person name="Morse A.T."/>
            <person name="Quijano K."/>
            <person name="Spraggon G."/>
            <person name="van den Bedem H."/>
            <person name="Wolf G."/>
            <person name="Hodgson K.O."/>
            <person name="Wooley J."/>
            <person name="Deacon A.M."/>
            <person name="Godzik A."/>
            <person name="Lesley S.A."/>
            <person name="Wilson I.A."/>
        </authorList>
    </citation>
    <scope>X-RAY CRYSTALLOGRAPHY (2.30 ANGSTROMS) IN COMPLEX WITH NICKEL</scope>
    <scope>SUBUNIT</scope>
    <source>
        <strain>ATCC 43589 / DSM 3109 / JCM 10099 / NBRC 100826 / MSB8</strain>
    </source>
</reference>
<proteinExistence type="evidence at protein level"/>
<sequence length="175" mass="19555">MHMKTVRQERLKSIVRILERSKEPVSGAQLAEELSVSRQVIVQDIAYLRSLGYNIVATPRGYVLAGGKSGVSRLVAVKHAPEEIKEELLCVVRNGGRIVDVIVEHPVYGEIRGIIDVSSEEEVLKFVNLMEMAKTEPLLTLSGGVHLHTIEAPDEETMERIMRELKKKGFLIEEG</sequence>
<feature type="chain" id="PRO_0000409021" description="Probable transcription repressor NiaR">
    <location>
        <begin position="1"/>
        <end position="175"/>
    </location>
</feature>
<feature type="binding site" evidence="1">
    <location>
        <position position="79"/>
    </location>
    <ligand>
        <name>Ni(2+)</name>
        <dbReference type="ChEBI" id="CHEBI:49786"/>
    </ligand>
</feature>
<feature type="binding site" evidence="1">
    <location>
        <position position="87"/>
    </location>
    <ligand>
        <name>Ni(2+)</name>
        <dbReference type="ChEBI" id="CHEBI:49786"/>
    </ligand>
</feature>
<feature type="binding site" evidence="1">
    <location>
        <position position="146"/>
    </location>
    <ligand>
        <name>Ni(2+)</name>
        <dbReference type="ChEBI" id="CHEBI:49786"/>
    </ligand>
</feature>
<feature type="binding site" evidence="1">
    <location>
        <position position="148"/>
    </location>
    <ligand>
        <name>Ni(2+)</name>
        <dbReference type="ChEBI" id="CHEBI:49786"/>
    </ligand>
</feature>
<feature type="helix" evidence="3">
    <location>
        <begin position="4"/>
        <end position="20"/>
    </location>
</feature>
<feature type="helix" evidence="3">
    <location>
        <begin position="27"/>
        <end position="34"/>
    </location>
</feature>
<feature type="helix" evidence="3">
    <location>
        <begin position="38"/>
        <end position="51"/>
    </location>
</feature>
<feature type="strand" evidence="3">
    <location>
        <begin position="56"/>
        <end position="58"/>
    </location>
</feature>
<feature type="strand" evidence="3">
    <location>
        <begin position="61"/>
        <end position="63"/>
    </location>
</feature>
<feature type="turn" evidence="3">
    <location>
        <begin position="66"/>
        <end position="68"/>
    </location>
</feature>
<feature type="strand" evidence="3">
    <location>
        <begin position="70"/>
        <end position="78"/>
    </location>
</feature>
<feature type="helix" evidence="3">
    <location>
        <begin position="81"/>
        <end position="83"/>
    </location>
</feature>
<feature type="helix" evidence="3">
    <location>
        <begin position="84"/>
        <end position="93"/>
    </location>
</feature>
<feature type="strand" evidence="3">
    <location>
        <begin position="97"/>
        <end position="105"/>
    </location>
</feature>
<feature type="turn" evidence="3">
    <location>
        <begin position="106"/>
        <end position="108"/>
    </location>
</feature>
<feature type="strand" evidence="3">
    <location>
        <begin position="109"/>
        <end position="117"/>
    </location>
</feature>
<feature type="helix" evidence="3">
    <location>
        <begin position="120"/>
        <end position="132"/>
    </location>
</feature>
<feature type="helix" evidence="3">
    <location>
        <begin position="141"/>
        <end position="144"/>
    </location>
</feature>
<feature type="strand" evidence="3">
    <location>
        <begin position="145"/>
        <end position="154"/>
    </location>
</feature>
<feature type="helix" evidence="3">
    <location>
        <begin position="155"/>
        <end position="167"/>
    </location>
</feature>
<organism>
    <name type="scientific">Thermotoga maritima (strain ATCC 43589 / DSM 3109 / JCM 10099 / NBRC 100826 / MSB8)</name>
    <dbReference type="NCBI Taxonomy" id="243274"/>
    <lineage>
        <taxon>Bacteria</taxon>
        <taxon>Thermotogati</taxon>
        <taxon>Thermotogota</taxon>
        <taxon>Thermotogae</taxon>
        <taxon>Thermotogales</taxon>
        <taxon>Thermotogaceae</taxon>
        <taxon>Thermotoga</taxon>
    </lineage>
</organism>
<comment type="function">
    <text>Probably functions to regulate transcription of NAD metabolic genes. Binds to DNA upstream of the probable nadBII/nadA/nadC and niaRP operons in a nicotinic acid dependent fashion. Nicotinic acid may be a corepressor.</text>
</comment>
<comment type="cofactor">
    <cofactor>
        <name>Ni(2+)</name>
        <dbReference type="ChEBI" id="CHEBI:49786"/>
    </cofactor>
    <text>Binds 1 Ni(2+) ion per monomer; it is not certain this is the physiological metal.</text>
</comment>
<comment type="subunit">
    <text evidence="2">Homodimer.</text>
</comment>
<evidence type="ECO:0000269" key="1">
    <source>
    </source>
</evidence>
<evidence type="ECO:0000305" key="2">
    <source>
    </source>
</evidence>
<evidence type="ECO:0007829" key="3">
    <source>
        <dbReference type="PDB" id="1J5Y"/>
    </source>
</evidence>